<evidence type="ECO:0000250" key="1"/>
<evidence type="ECO:0000250" key="2">
    <source>
        <dbReference type="UniProtKB" id="P41350"/>
    </source>
</evidence>
<evidence type="ECO:0000250" key="3">
    <source>
        <dbReference type="UniProtKB" id="P49817"/>
    </source>
</evidence>
<evidence type="ECO:0000250" key="4">
    <source>
        <dbReference type="UniProtKB" id="Q03135"/>
    </source>
</evidence>
<evidence type="ECO:0000250" key="5">
    <source>
        <dbReference type="UniProtKB" id="Q2IBA5"/>
    </source>
</evidence>
<evidence type="ECO:0000255" key="6"/>
<evidence type="ECO:0000305" key="7"/>
<proteinExistence type="inferred from homology"/>
<feature type="initiator methionine" description="Removed" evidence="4">
    <location>
        <position position="1"/>
    </location>
</feature>
<feature type="chain" id="PRO_0000229034" description="Caveolin-1">
    <location>
        <begin position="2"/>
        <end position="178"/>
    </location>
</feature>
<feature type="topological domain" description="Cytoplasmic" evidence="6">
    <location>
        <begin position="2"/>
        <end position="104"/>
    </location>
</feature>
<feature type="intramembrane region" description="Helical" evidence="6">
    <location>
        <begin position="105"/>
        <end position="125"/>
    </location>
</feature>
<feature type="topological domain" description="Cytoplasmic" evidence="6">
    <location>
        <begin position="126"/>
        <end position="178"/>
    </location>
</feature>
<feature type="region of interest" description="Required for homooligomerization" evidence="4">
    <location>
        <begin position="2"/>
        <end position="94"/>
    </location>
</feature>
<feature type="region of interest" description="Interaction with CAVIN3" evidence="4">
    <location>
        <begin position="82"/>
        <end position="94"/>
    </location>
</feature>
<feature type="region of interest" description="Interacts with SPRY1, SPRY2, SPRY3 and SPRY4" evidence="3">
    <location>
        <begin position="131"/>
        <end position="142"/>
    </location>
</feature>
<feature type="region of interest" description="Interacts with SPRY1, SPRY2, and SPRY4" evidence="3">
    <location>
        <begin position="149"/>
        <end position="160"/>
    </location>
</feature>
<feature type="region of interest" description="Interacts with SPRY1, SPRY2, SPRY3 and SPRY4" evidence="3">
    <location>
        <begin position="167"/>
        <end position="178"/>
    </location>
</feature>
<feature type="modified residue" description="N-acetylserine" evidence="4">
    <location>
        <position position="2"/>
    </location>
</feature>
<feature type="modified residue" description="Phosphoserine" evidence="2">
    <location>
        <position position="2"/>
    </location>
</feature>
<feature type="modified residue" description="N6-acetyllysine; alternate" evidence="4">
    <location>
        <position position="5"/>
    </location>
</feature>
<feature type="modified residue" description="Phosphotyrosine" evidence="4">
    <location>
        <position position="6"/>
    </location>
</feature>
<feature type="modified residue" description="Phosphoserine" evidence="3">
    <location>
        <position position="9"/>
    </location>
</feature>
<feature type="modified residue" description="Phosphotyrosine; by ABL1" evidence="3">
    <location>
        <position position="14"/>
    </location>
</feature>
<feature type="modified residue" description="Phosphotyrosine" evidence="4">
    <location>
        <position position="25"/>
    </location>
</feature>
<feature type="modified residue" description="Phosphoserine" evidence="4">
    <location>
        <position position="37"/>
    </location>
</feature>
<feature type="lipid moiety-binding region" description="S-palmitoyl cysteine" evidence="1">
    <location>
        <position position="133"/>
    </location>
</feature>
<feature type="lipid moiety-binding region" description="S-palmitoyl cysteine" evidence="1">
    <location>
        <position position="143"/>
    </location>
</feature>
<feature type="lipid moiety-binding region" description="S-palmitoyl cysteine" evidence="1">
    <location>
        <position position="156"/>
    </location>
</feature>
<feature type="cross-link" description="Glycyl lysine isopeptide (Lys-Gly) (interchain with G-Cter in ubiquitin); alternate" evidence="4">
    <location>
        <position position="5"/>
    </location>
</feature>
<feature type="cross-link" description="Glycyl lysine isopeptide (Lys-Gly) (interchain with G-Cter in ubiquitin)" evidence="4">
    <location>
        <position position="26"/>
    </location>
</feature>
<feature type="cross-link" description="Glycyl lysine isopeptide (Lys-Gly) (interchain with G-Cter in ubiquitin)" evidence="4">
    <location>
        <position position="30"/>
    </location>
</feature>
<feature type="cross-link" description="Glycyl lysine isopeptide (Lys-Gly) (interchain with G-Cter in ubiquitin)" evidence="4">
    <location>
        <position position="39"/>
    </location>
</feature>
<feature type="cross-link" description="Glycyl lysine isopeptide (Lys-Gly) (interchain with G-Cter in ubiquitin)" evidence="4">
    <location>
        <position position="47"/>
    </location>
</feature>
<feature type="cross-link" description="Glycyl lysine isopeptide (Lys-Gly) (interchain with G-Cter in ubiquitin)" evidence="4">
    <location>
        <position position="57"/>
    </location>
</feature>
<keyword id="KW-0007">Acetylation</keyword>
<keyword id="KW-1003">Cell membrane</keyword>
<keyword id="KW-0333">Golgi apparatus</keyword>
<keyword id="KW-1017">Isopeptide bond</keyword>
<keyword id="KW-0449">Lipoprotein</keyword>
<keyword id="KW-0472">Membrane</keyword>
<keyword id="KW-0564">Palmitate</keyword>
<keyword id="KW-0597">Phosphoprotein</keyword>
<keyword id="KW-1185">Reference proteome</keyword>
<keyword id="KW-0832">Ubl conjugation</keyword>
<organism>
    <name type="scientific">Pongo abelii</name>
    <name type="common">Sumatran orangutan</name>
    <name type="synonym">Pongo pygmaeus abelii</name>
    <dbReference type="NCBI Taxonomy" id="9601"/>
    <lineage>
        <taxon>Eukaryota</taxon>
        <taxon>Metazoa</taxon>
        <taxon>Chordata</taxon>
        <taxon>Craniata</taxon>
        <taxon>Vertebrata</taxon>
        <taxon>Euteleostomi</taxon>
        <taxon>Mammalia</taxon>
        <taxon>Eutheria</taxon>
        <taxon>Euarchontoglires</taxon>
        <taxon>Primates</taxon>
        <taxon>Haplorrhini</taxon>
        <taxon>Catarrhini</taxon>
        <taxon>Hominidae</taxon>
        <taxon>Pongo</taxon>
    </lineage>
</organism>
<sequence>MSGGKYVDSEGHLYTVPIREQGNIYKPNNKAMAEELSEKQVYDAHTKEIDLVNRDPKHLNDDVVKIDFEDVIAEPEGTHSFDGIWKASFTTFTVTKYWFYRLLSALFGIPMALIWGIYFAILSFLHIWAVVPCIKSFLIEIQCISRVYSIYVHTVCDPLFEAVGKIFSNVRINLQKEI</sequence>
<protein>
    <recommendedName>
        <fullName>Caveolin-1</fullName>
    </recommendedName>
</protein>
<gene>
    <name type="primary">CAV1</name>
</gene>
<comment type="function">
    <text evidence="3 4">May act as a scaffolding protein within caveolar membranes. Forms a stable heterooligomeric complex with CAV2 that targets to lipid rafts and drives caveolae formation. Mediates the recruitment of CAVIN proteins (CAVIN1/2/3/4) to the caveolae (By similarity). Interacts directly with G-protein alpha subunits and can functionally regulate their activity (By similarity). Involved in the costimulatory signal essential for T-cell receptor (TCR)-mediated T-cell activation. Its binding to DPP4 induces T-cell proliferation and NF-kappa-B activation in a T-cell receptor/CD3-dependent manner (By similarity). Recruits CTNNB1 to caveolar membranes and may regulate CTNNB1-mediated signaling through the Wnt pathway (By similarity). Negatively regulates TGFB1-mediated activation of SMAD2/3 by mediating the internalization of TGFBR1 from membrane rafts leading to its subsequent degradation (By similarity). Binds 20(S)-hydroxycholesterol (20(S)-OHC) (By similarity).</text>
</comment>
<comment type="subunit">
    <text evidence="2 3 4 5">Homooligomer. Interacts with GLIPR2. Interacts with NOSTRIN (By similarity). Interacts with SNAP25 and STX1A (By similarity). Interacts (via the N-terminus) with DPP4; the interaction is direct (By similarity). Interacts with CTNNB1, CDH1 and JUP. Interacts with PACSIN2; this interaction induces membrane tubulation (By similarity). Interacts with SLC7A9 (By similarity). Interacts with BMX and BTK. Interacts with TGFBR1. Interacts with CAVIN3 (via leucine-zipper domain) in a cholesterol-sensitive manner. Interacts with CAVIN1. Interacts with EHD2 in a cholesterol-dependent manner. Forms a ternary complex with UBXN6 and VCP; mediates CAV1 targeting to lysosomes for degradation. Interacts with ABCG1; this interaction regulates ABCG1-mediated cholesterol efflux (By similarity). Interacts with NEU3; this interaction enhances NEU3 sialidase activity within caveola. Interacts (via C-terminus) with SPRY1, SPRY2 (via C-terminus), SPRY3, and SPRY4 (By similarity). Interacts with IGFBP5; this interaction allows trafficking of IGFBP5 from the plasma membrane to the nucleus (By similarity).</text>
</comment>
<comment type="subcellular location">
    <subcellularLocation>
        <location evidence="1">Golgi apparatus membrane</location>
        <topology evidence="1">Peripheral membrane protein</topology>
    </subcellularLocation>
    <subcellularLocation>
        <location evidence="1">Cell membrane</location>
        <topology evidence="1">Peripheral membrane protein</topology>
    </subcellularLocation>
    <subcellularLocation>
        <location evidence="3">Membrane</location>
        <location evidence="3">Caveola</location>
        <topology evidence="1">Peripheral membrane protein</topology>
    </subcellularLocation>
    <subcellularLocation>
        <location evidence="4">Membrane raft</location>
    </subcellularLocation>
    <text evidence="1">Colocalized with DPP4 in membrane rafts. Potential hairpin-like structure in the membrane. Membrane protein of caveolae (By similarity).</text>
</comment>
<comment type="PTM">
    <text evidence="4">Phosphorylated at Tyr-14 by ABL1 in response to oxidative stress.</text>
</comment>
<comment type="PTM">
    <text evidence="4">Ubiquitinated. Undergo monoubiquitination and multi- and/or polyubiquitination. Monoubiquitination of N-terminal lysines promotes integration in a ternary complex with UBXN6 and VCP which promotes oligomeric CAV1 targeting to lysosomes for degradation. Ubiquitinated by ZNRF1; leading to degradation and modulation of the TLR4-mediated immune response.</text>
</comment>
<comment type="similarity">
    <text evidence="7">Belongs to the caveolin family.</text>
</comment>
<dbReference type="EMBL" id="DP000026">
    <property type="protein sequence ID" value="ABC87459.1"/>
    <property type="molecule type" value="Genomic_DNA"/>
</dbReference>
<dbReference type="RefSeq" id="NP_001162005.1">
    <property type="nucleotide sequence ID" value="NM_001168533.1"/>
</dbReference>
<dbReference type="FunCoup" id="Q2IBD7">
    <property type="interactions" value="1869"/>
</dbReference>
<dbReference type="STRING" id="9601.ENSPPYP00000020105"/>
<dbReference type="Ensembl" id="ENSPPYT00000020897.3">
    <property type="protein sequence ID" value="ENSPPYP00000020105.2"/>
    <property type="gene ID" value="ENSPPYG00000017931.3"/>
</dbReference>
<dbReference type="GeneID" id="100137027"/>
<dbReference type="KEGG" id="pon:100137027"/>
<dbReference type="CTD" id="857"/>
<dbReference type="eggNOG" id="ENOG502QUK5">
    <property type="taxonomic scope" value="Eukaryota"/>
</dbReference>
<dbReference type="GeneTree" id="ENSGT00950000183006"/>
<dbReference type="HOGENOM" id="CLU_102582_0_0_1"/>
<dbReference type="InParanoid" id="Q2IBD7"/>
<dbReference type="OMA" id="MSGSKYV"/>
<dbReference type="OrthoDB" id="5917823at2759"/>
<dbReference type="TreeFam" id="TF315736"/>
<dbReference type="Proteomes" id="UP000001595">
    <property type="component" value="Chromosome 7"/>
</dbReference>
<dbReference type="GO" id="GO:0002080">
    <property type="term" value="C:acrosomal membrane"/>
    <property type="evidence" value="ECO:0007669"/>
    <property type="project" value="Ensembl"/>
</dbReference>
<dbReference type="GO" id="GO:0005901">
    <property type="term" value="C:caveola"/>
    <property type="evidence" value="ECO:0000250"/>
    <property type="project" value="UniProtKB"/>
</dbReference>
<dbReference type="GO" id="GO:0002095">
    <property type="term" value="C:caveolar macromolecular signaling complex"/>
    <property type="evidence" value="ECO:0007669"/>
    <property type="project" value="Ensembl"/>
</dbReference>
<dbReference type="GO" id="GO:0005938">
    <property type="term" value="C:cell cortex"/>
    <property type="evidence" value="ECO:0007669"/>
    <property type="project" value="Ensembl"/>
</dbReference>
<dbReference type="GO" id="GO:0005929">
    <property type="term" value="C:cilium"/>
    <property type="evidence" value="ECO:0007669"/>
    <property type="project" value="Ensembl"/>
</dbReference>
<dbReference type="GO" id="GO:0005783">
    <property type="term" value="C:endoplasmic reticulum"/>
    <property type="evidence" value="ECO:0007669"/>
    <property type="project" value="Ensembl"/>
</dbReference>
<dbReference type="GO" id="GO:0005768">
    <property type="term" value="C:endosome"/>
    <property type="evidence" value="ECO:0000250"/>
    <property type="project" value="UniProtKB"/>
</dbReference>
<dbReference type="GO" id="GO:0005925">
    <property type="term" value="C:focal adhesion"/>
    <property type="evidence" value="ECO:0007669"/>
    <property type="project" value="Ensembl"/>
</dbReference>
<dbReference type="GO" id="GO:0000139">
    <property type="term" value="C:Golgi membrane"/>
    <property type="evidence" value="ECO:0007669"/>
    <property type="project" value="UniProtKB-SubCell"/>
</dbReference>
<dbReference type="GO" id="GO:0045121">
    <property type="term" value="C:membrane raft"/>
    <property type="evidence" value="ECO:0000250"/>
    <property type="project" value="UniProtKB"/>
</dbReference>
<dbReference type="GO" id="GO:0048471">
    <property type="term" value="C:perinuclear region of cytoplasm"/>
    <property type="evidence" value="ECO:0007669"/>
    <property type="project" value="Ensembl"/>
</dbReference>
<dbReference type="GO" id="GO:0042383">
    <property type="term" value="C:sarcolemma"/>
    <property type="evidence" value="ECO:0007669"/>
    <property type="project" value="TreeGrafter"/>
</dbReference>
<dbReference type="GO" id="GO:0051117">
    <property type="term" value="F:ATPase binding"/>
    <property type="evidence" value="ECO:0007669"/>
    <property type="project" value="Ensembl"/>
</dbReference>
<dbReference type="GO" id="GO:0042802">
    <property type="term" value="F:identical protein binding"/>
    <property type="evidence" value="ECO:0007669"/>
    <property type="project" value="Ensembl"/>
</dbReference>
<dbReference type="GO" id="GO:0070320">
    <property type="term" value="F:inward rectifier potassium channel inhibitor activity"/>
    <property type="evidence" value="ECO:0007669"/>
    <property type="project" value="Ensembl"/>
</dbReference>
<dbReference type="GO" id="GO:0050998">
    <property type="term" value="F:nitric-oxide synthase binding"/>
    <property type="evidence" value="ECO:0007669"/>
    <property type="project" value="Ensembl"/>
</dbReference>
<dbReference type="GO" id="GO:0008142">
    <property type="term" value="F:oxysterol binding"/>
    <property type="evidence" value="ECO:0000250"/>
    <property type="project" value="UniProtKB"/>
</dbReference>
<dbReference type="GO" id="GO:0016504">
    <property type="term" value="F:peptidase activator activity"/>
    <property type="evidence" value="ECO:0007669"/>
    <property type="project" value="Ensembl"/>
</dbReference>
<dbReference type="GO" id="GO:0046982">
    <property type="term" value="F:protein heterodimerization activity"/>
    <property type="evidence" value="ECO:0007669"/>
    <property type="project" value="Ensembl"/>
</dbReference>
<dbReference type="GO" id="GO:0019901">
    <property type="term" value="F:protein kinase binding"/>
    <property type="evidence" value="ECO:0007669"/>
    <property type="project" value="Ensembl"/>
</dbReference>
<dbReference type="GO" id="GO:0030292">
    <property type="term" value="F:protein tyrosine kinase inhibitor activity"/>
    <property type="evidence" value="ECO:0007669"/>
    <property type="project" value="Ensembl"/>
</dbReference>
<dbReference type="GO" id="GO:0044877">
    <property type="term" value="F:protein-containing complex binding"/>
    <property type="evidence" value="ECO:0007669"/>
    <property type="project" value="Ensembl"/>
</dbReference>
<dbReference type="GO" id="GO:0030674">
    <property type="term" value="F:protein-macromolecule adaptor activity"/>
    <property type="evidence" value="ECO:0007669"/>
    <property type="project" value="Ensembl"/>
</dbReference>
<dbReference type="GO" id="GO:0005102">
    <property type="term" value="F:signaling receptor binding"/>
    <property type="evidence" value="ECO:0007669"/>
    <property type="project" value="Ensembl"/>
</dbReference>
<dbReference type="GO" id="GO:0031267">
    <property type="term" value="F:small GTPase binding"/>
    <property type="evidence" value="ECO:0007669"/>
    <property type="project" value="Ensembl"/>
</dbReference>
<dbReference type="GO" id="GO:0044325">
    <property type="term" value="F:transmembrane transporter binding"/>
    <property type="evidence" value="ECO:0007669"/>
    <property type="project" value="Ensembl"/>
</dbReference>
<dbReference type="GO" id="GO:0001525">
    <property type="term" value="P:angiogenesis"/>
    <property type="evidence" value="ECO:0007669"/>
    <property type="project" value="Ensembl"/>
</dbReference>
<dbReference type="GO" id="GO:0038166">
    <property type="term" value="P:angiotensin-activated signaling pathway"/>
    <property type="evidence" value="ECO:0007669"/>
    <property type="project" value="Ensembl"/>
</dbReference>
<dbReference type="GO" id="GO:0097190">
    <property type="term" value="P:apoptotic signaling pathway"/>
    <property type="evidence" value="ECO:0007669"/>
    <property type="project" value="Ensembl"/>
</dbReference>
<dbReference type="GO" id="GO:0071711">
    <property type="term" value="P:basement membrane organization"/>
    <property type="evidence" value="ECO:0007669"/>
    <property type="project" value="Ensembl"/>
</dbReference>
<dbReference type="GO" id="GO:0006816">
    <property type="term" value="P:calcium ion transport"/>
    <property type="evidence" value="ECO:0007669"/>
    <property type="project" value="Ensembl"/>
</dbReference>
<dbReference type="GO" id="GO:0060070">
    <property type="term" value="P:canonical Wnt signaling pathway"/>
    <property type="evidence" value="ECO:0007669"/>
    <property type="project" value="Ensembl"/>
</dbReference>
<dbReference type="GO" id="GO:0070836">
    <property type="term" value="P:caveola assembly"/>
    <property type="evidence" value="ECO:0007669"/>
    <property type="project" value="Ensembl"/>
</dbReference>
<dbReference type="GO" id="GO:0072584">
    <property type="term" value="P:caveolin-mediated endocytosis"/>
    <property type="evidence" value="ECO:0007669"/>
    <property type="project" value="Ensembl"/>
</dbReference>
<dbReference type="GO" id="GO:0071360">
    <property type="term" value="P:cellular response to exogenous dsRNA"/>
    <property type="evidence" value="ECO:0007669"/>
    <property type="project" value="Ensembl"/>
</dbReference>
<dbReference type="GO" id="GO:0071455">
    <property type="term" value="P:cellular response to hyperoxia"/>
    <property type="evidence" value="ECO:0007669"/>
    <property type="project" value="Ensembl"/>
</dbReference>
<dbReference type="GO" id="GO:0071218">
    <property type="term" value="P:cellular response to misfolded protein"/>
    <property type="evidence" value="ECO:0007669"/>
    <property type="project" value="Ensembl"/>
</dbReference>
<dbReference type="GO" id="GO:0071560">
    <property type="term" value="P:cellular response to transforming growth factor beta stimulus"/>
    <property type="evidence" value="ECO:0007669"/>
    <property type="project" value="Ensembl"/>
</dbReference>
<dbReference type="GO" id="GO:0042632">
    <property type="term" value="P:cholesterol homeostasis"/>
    <property type="evidence" value="ECO:0007669"/>
    <property type="project" value="Ensembl"/>
</dbReference>
<dbReference type="GO" id="GO:0019221">
    <property type="term" value="P:cytokine-mediated signaling pathway"/>
    <property type="evidence" value="ECO:0007669"/>
    <property type="project" value="Ensembl"/>
</dbReference>
<dbReference type="GO" id="GO:0001935">
    <property type="term" value="P:endothelial cell proliferation"/>
    <property type="evidence" value="ECO:0007669"/>
    <property type="project" value="Ensembl"/>
</dbReference>
<dbReference type="GO" id="GO:0051649">
    <property type="term" value="P:establishment of localization in cell"/>
    <property type="evidence" value="ECO:0007669"/>
    <property type="project" value="Ensembl"/>
</dbReference>
<dbReference type="GO" id="GO:0048144">
    <property type="term" value="P:fibroblast proliferation"/>
    <property type="evidence" value="ECO:0007669"/>
    <property type="project" value="Ensembl"/>
</dbReference>
<dbReference type="GO" id="GO:0002067">
    <property type="term" value="P:glandular epithelial cell differentiation"/>
    <property type="evidence" value="ECO:0007669"/>
    <property type="project" value="Ensembl"/>
</dbReference>
<dbReference type="GO" id="GO:0038016">
    <property type="term" value="P:insulin receptor internalization"/>
    <property type="evidence" value="ECO:0007669"/>
    <property type="project" value="Ensembl"/>
</dbReference>
<dbReference type="GO" id="GO:0033484">
    <property type="term" value="P:intracellular nitric oxide homeostasis"/>
    <property type="evidence" value="ECO:0007669"/>
    <property type="project" value="Ensembl"/>
</dbReference>
<dbReference type="GO" id="GO:0007595">
    <property type="term" value="P:lactation"/>
    <property type="evidence" value="ECO:0007669"/>
    <property type="project" value="Ensembl"/>
</dbReference>
<dbReference type="GO" id="GO:0019915">
    <property type="term" value="P:lipid storage"/>
    <property type="evidence" value="ECO:0007669"/>
    <property type="project" value="Ensembl"/>
</dbReference>
<dbReference type="GO" id="GO:0060056">
    <property type="term" value="P:mammary gland involution"/>
    <property type="evidence" value="ECO:0007669"/>
    <property type="project" value="Ensembl"/>
</dbReference>
<dbReference type="GO" id="GO:0000165">
    <property type="term" value="P:MAPK cascade"/>
    <property type="evidence" value="ECO:0007669"/>
    <property type="project" value="Ensembl"/>
</dbReference>
<dbReference type="GO" id="GO:0051899">
    <property type="term" value="P:membrane depolarization"/>
    <property type="evidence" value="ECO:0007669"/>
    <property type="project" value="Ensembl"/>
</dbReference>
<dbReference type="GO" id="GO:0046716">
    <property type="term" value="P:muscle cell cellular homeostasis"/>
    <property type="evidence" value="ECO:0007669"/>
    <property type="project" value="Ensembl"/>
</dbReference>
<dbReference type="GO" id="GO:2000811">
    <property type="term" value="P:negative regulation of anoikis"/>
    <property type="evidence" value="ECO:0007669"/>
    <property type="project" value="Ensembl"/>
</dbReference>
<dbReference type="GO" id="GO:0090090">
    <property type="term" value="P:negative regulation of canonical Wnt signaling pathway"/>
    <property type="evidence" value="ECO:0007669"/>
    <property type="project" value="Ensembl"/>
</dbReference>
<dbReference type="GO" id="GO:0001960">
    <property type="term" value="P:negative regulation of cytokine-mediated signaling pathway"/>
    <property type="evidence" value="ECO:0007669"/>
    <property type="project" value="Ensembl"/>
</dbReference>
<dbReference type="GO" id="GO:0001937">
    <property type="term" value="P:negative regulation of endothelial cell proliferation"/>
    <property type="evidence" value="ECO:0007669"/>
    <property type="project" value="Ensembl"/>
</dbReference>
<dbReference type="GO" id="GO:0030857">
    <property type="term" value="P:negative regulation of epithelial cell differentiation"/>
    <property type="evidence" value="ECO:0007669"/>
    <property type="project" value="Ensembl"/>
</dbReference>
<dbReference type="GO" id="GO:0048147">
    <property type="term" value="P:negative regulation of fibroblast proliferation"/>
    <property type="evidence" value="ECO:0007669"/>
    <property type="project" value="Ensembl"/>
</dbReference>
<dbReference type="GO" id="GO:0043409">
    <property type="term" value="P:negative regulation of MAPK cascade"/>
    <property type="evidence" value="ECO:0007669"/>
    <property type="project" value="Ensembl"/>
</dbReference>
<dbReference type="GO" id="GO:0060546">
    <property type="term" value="P:negative regulation of necroptotic process"/>
    <property type="evidence" value="ECO:0007669"/>
    <property type="project" value="Ensembl"/>
</dbReference>
<dbReference type="GO" id="GO:0045019">
    <property type="term" value="P:negative regulation of nitric oxide biosynthetic process"/>
    <property type="evidence" value="ECO:0007669"/>
    <property type="project" value="Ensembl"/>
</dbReference>
<dbReference type="GO" id="GO:0048550">
    <property type="term" value="P:negative regulation of pinocytosis"/>
    <property type="evidence" value="ECO:0007669"/>
    <property type="project" value="Ensembl"/>
</dbReference>
<dbReference type="GO" id="GO:1901380">
    <property type="term" value="P:negative regulation of potassium ion transmembrane transport"/>
    <property type="evidence" value="ECO:0007669"/>
    <property type="project" value="Ensembl"/>
</dbReference>
<dbReference type="GO" id="GO:0031397">
    <property type="term" value="P:negative regulation of protein ubiquitination"/>
    <property type="evidence" value="ECO:0007669"/>
    <property type="project" value="Ensembl"/>
</dbReference>
<dbReference type="GO" id="GO:0046426">
    <property type="term" value="P:negative regulation of receptor signaling pathway via JAK-STAT"/>
    <property type="evidence" value="ECO:0007669"/>
    <property type="project" value="Ensembl"/>
</dbReference>
<dbReference type="GO" id="GO:0000122">
    <property type="term" value="P:negative regulation of transcription by RNA polymerase II"/>
    <property type="evidence" value="ECO:0007669"/>
    <property type="project" value="Ensembl"/>
</dbReference>
<dbReference type="GO" id="GO:0006809">
    <property type="term" value="P:nitric oxide biosynthetic process"/>
    <property type="evidence" value="ECO:0007669"/>
    <property type="project" value="Ensembl"/>
</dbReference>
<dbReference type="GO" id="GO:0010524">
    <property type="term" value="P:positive regulation of calcium ion transport into cytosol"/>
    <property type="evidence" value="ECO:0007669"/>
    <property type="project" value="Ensembl"/>
</dbReference>
<dbReference type="GO" id="GO:0043123">
    <property type="term" value="P:positive regulation of canonical NF-kappaB signal transduction"/>
    <property type="evidence" value="ECO:0007669"/>
    <property type="project" value="Ensembl"/>
</dbReference>
<dbReference type="GO" id="GO:0060355">
    <property type="term" value="P:positive regulation of cell adhesion molecule production"/>
    <property type="evidence" value="ECO:0007669"/>
    <property type="project" value="Ensembl"/>
</dbReference>
<dbReference type="GO" id="GO:0030335">
    <property type="term" value="P:positive regulation of cell migration"/>
    <property type="evidence" value="ECO:0007669"/>
    <property type="project" value="Ensembl"/>
</dbReference>
<dbReference type="GO" id="GO:0010875">
    <property type="term" value="P:positive regulation of cholesterol efflux"/>
    <property type="evidence" value="ECO:0007669"/>
    <property type="project" value="Ensembl"/>
</dbReference>
<dbReference type="GO" id="GO:0120162">
    <property type="term" value="P:positive regulation of cold-induced thermogenesis"/>
    <property type="evidence" value="ECO:0007669"/>
    <property type="project" value="Ensembl"/>
</dbReference>
<dbReference type="GO" id="GO:1904294">
    <property type="term" value="P:positive regulation of ERAD pathway"/>
    <property type="evidence" value="ECO:0007669"/>
    <property type="project" value="Ensembl"/>
</dbReference>
<dbReference type="GO" id="GO:2001238">
    <property type="term" value="P:positive regulation of extrinsic apoptotic signaling pathway"/>
    <property type="evidence" value="ECO:0007669"/>
    <property type="project" value="Ensembl"/>
</dbReference>
<dbReference type="GO" id="GO:1903598">
    <property type="term" value="P:positive regulation of gap junction assembly"/>
    <property type="evidence" value="ECO:0007669"/>
    <property type="project" value="Ensembl"/>
</dbReference>
<dbReference type="GO" id="GO:0010628">
    <property type="term" value="P:positive regulation of gene expression"/>
    <property type="evidence" value="ECO:0007669"/>
    <property type="project" value="Ensembl"/>
</dbReference>
<dbReference type="GO" id="GO:2001244">
    <property type="term" value="P:positive regulation of intrinsic apoptotic signaling pathway"/>
    <property type="evidence" value="ECO:0007669"/>
    <property type="project" value="Ensembl"/>
</dbReference>
<dbReference type="GO" id="GO:0031398">
    <property type="term" value="P:positive regulation of protein ubiquitination"/>
    <property type="evidence" value="ECO:0007669"/>
    <property type="project" value="Ensembl"/>
</dbReference>
<dbReference type="GO" id="GO:0034141">
    <property type="term" value="P:positive regulation of toll-like receptor 3 signaling pathway"/>
    <property type="evidence" value="ECO:0007669"/>
    <property type="project" value="Ensembl"/>
</dbReference>
<dbReference type="GO" id="GO:0045907">
    <property type="term" value="P:positive regulation of vasoconstriction"/>
    <property type="evidence" value="ECO:0007669"/>
    <property type="project" value="Ensembl"/>
</dbReference>
<dbReference type="GO" id="GO:0010608">
    <property type="term" value="P:post-transcriptional regulation of gene expression"/>
    <property type="evidence" value="ECO:0007669"/>
    <property type="project" value="Ensembl"/>
</dbReference>
<dbReference type="GO" id="GO:0015031">
    <property type="term" value="P:protein transport"/>
    <property type="evidence" value="ECO:0007669"/>
    <property type="project" value="Ensembl"/>
</dbReference>
<dbReference type="GO" id="GO:0031623">
    <property type="term" value="P:receptor internalization"/>
    <property type="evidence" value="ECO:0000250"/>
    <property type="project" value="UniProtKB"/>
</dbReference>
<dbReference type="GO" id="GO:0019065">
    <property type="term" value="P:receptor-mediated endocytosis of virus by host cell"/>
    <property type="evidence" value="ECO:0007669"/>
    <property type="project" value="Ensembl"/>
</dbReference>
<dbReference type="GO" id="GO:0030193">
    <property type="term" value="P:regulation of blood coagulation"/>
    <property type="evidence" value="ECO:0007669"/>
    <property type="project" value="Ensembl"/>
</dbReference>
<dbReference type="GO" id="GO:1901844">
    <property type="term" value="P:regulation of cell communication by electrical coupling involved in cardiac conduction"/>
    <property type="evidence" value="ECO:0007669"/>
    <property type="project" value="Ensembl"/>
</dbReference>
<dbReference type="GO" id="GO:0051480">
    <property type="term" value="P:regulation of cytosolic calcium ion concentration"/>
    <property type="evidence" value="ECO:0007669"/>
    <property type="project" value="Ensembl"/>
</dbReference>
<dbReference type="GO" id="GO:2000535">
    <property type="term" value="P:regulation of entry of bacterium into host cell"/>
    <property type="evidence" value="ECO:0007669"/>
    <property type="project" value="Ensembl"/>
</dbReference>
<dbReference type="GO" id="GO:0019217">
    <property type="term" value="P:regulation of fatty acid metabolic process"/>
    <property type="evidence" value="ECO:0007669"/>
    <property type="project" value="Ensembl"/>
</dbReference>
<dbReference type="GO" id="GO:0086091">
    <property type="term" value="P:regulation of heart rate by cardiac conduction"/>
    <property type="evidence" value="ECO:0007669"/>
    <property type="project" value="Ensembl"/>
</dbReference>
<dbReference type="GO" id="GO:0098903">
    <property type="term" value="P:regulation of membrane repolarization during action potential"/>
    <property type="evidence" value="ECO:0007669"/>
    <property type="project" value="Ensembl"/>
</dbReference>
<dbReference type="GO" id="GO:1900027">
    <property type="term" value="P:regulation of ruffle assembly"/>
    <property type="evidence" value="ECO:0007669"/>
    <property type="project" value="Ensembl"/>
</dbReference>
<dbReference type="GO" id="GO:0006940">
    <property type="term" value="P:regulation of smooth muscle contraction"/>
    <property type="evidence" value="ECO:0007669"/>
    <property type="project" value="Ensembl"/>
</dbReference>
<dbReference type="GO" id="GO:0003057">
    <property type="term" value="P:regulation of the force of heart contraction by chemical signal"/>
    <property type="evidence" value="ECO:0007669"/>
    <property type="project" value="Ensembl"/>
</dbReference>
<dbReference type="GO" id="GO:0098911">
    <property type="term" value="P:regulation of ventricular cardiac muscle cell action potential"/>
    <property type="evidence" value="ECO:0007669"/>
    <property type="project" value="Ensembl"/>
</dbReference>
<dbReference type="GO" id="GO:0009617">
    <property type="term" value="P:response to bacterium"/>
    <property type="evidence" value="ECO:0007669"/>
    <property type="project" value="Ensembl"/>
</dbReference>
<dbReference type="GO" id="GO:0051592">
    <property type="term" value="P:response to calcium ion"/>
    <property type="evidence" value="ECO:0007669"/>
    <property type="project" value="Ensembl"/>
</dbReference>
<dbReference type="GO" id="GO:0043627">
    <property type="term" value="P:response to estrogen"/>
    <property type="evidence" value="ECO:0007669"/>
    <property type="project" value="Ensembl"/>
</dbReference>
<dbReference type="GO" id="GO:0001666">
    <property type="term" value="P:response to hypoxia"/>
    <property type="evidence" value="ECO:0007669"/>
    <property type="project" value="Ensembl"/>
</dbReference>
<dbReference type="GO" id="GO:0002931">
    <property type="term" value="P:response to ischemia"/>
    <property type="evidence" value="ECO:0007669"/>
    <property type="project" value="Ensembl"/>
</dbReference>
<dbReference type="GO" id="GO:0032570">
    <property type="term" value="P:response to progesterone"/>
    <property type="evidence" value="ECO:0007669"/>
    <property type="project" value="Ensembl"/>
</dbReference>
<dbReference type="GO" id="GO:0007519">
    <property type="term" value="P:skeletal muscle tissue development"/>
    <property type="evidence" value="ECO:0007669"/>
    <property type="project" value="Ensembl"/>
</dbReference>
<dbReference type="GO" id="GO:0031295">
    <property type="term" value="P:T cell costimulation"/>
    <property type="evidence" value="ECO:0000250"/>
    <property type="project" value="UniProtKB"/>
</dbReference>
<dbReference type="GO" id="GO:0006641">
    <property type="term" value="P:triglyceride metabolic process"/>
    <property type="evidence" value="ECO:0007669"/>
    <property type="project" value="Ensembl"/>
</dbReference>
<dbReference type="GO" id="GO:0001570">
    <property type="term" value="P:vasculogenesis"/>
    <property type="evidence" value="ECO:0007669"/>
    <property type="project" value="Ensembl"/>
</dbReference>
<dbReference type="GO" id="GO:0042310">
    <property type="term" value="P:vasoconstriction"/>
    <property type="evidence" value="ECO:0007669"/>
    <property type="project" value="Ensembl"/>
</dbReference>
<dbReference type="InterPro" id="IPR001612">
    <property type="entry name" value="Caveolin"/>
</dbReference>
<dbReference type="InterPro" id="IPR018361">
    <property type="entry name" value="Caveolin_CS"/>
</dbReference>
<dbReference type="PANTHER" id="PTHR10844">
    <property type="entry name" value="CAVEOLIN"/>
    <property type="match status" value="1"/>
</dbReference>
<dbReference type="PANTHER" id="PTHR10844:SF18">
    <property type="entry name" value="CAVEOLIN-1"/>
    <property type="match status" value="1"/>
</dbReference>
<dbReference type="Pfam" id="PF01146">
    <property type="entry name" value="Caveolin"/>
    <property type="match status" value="1"/>
</dbReference>
<dbReference type="PROSITE" id="PS01210">
    <property type="entry name" value="CAVEOLIN"/>
    <property type="match status" value="1"/>
</dbReference>
<accession>Q2IBD7</accession>
<name>CAV1_PONAB</name>
<reference key="1">
    <citation type="submission" date="2006-01" db="EMBL/GenBank/DDBJ databases">
        <title>NISC comparative sequencing initiative.</title>
        <authorList>
            <person name="Antonellis A."/>
            <person name="Ayele K."/>
            <person name="Benjamin B."/>
            <person name="Blakesley R.W."/>
            <person name="Boakye A."/>
            <person name="Bouffard G.G."/>
            <person name="Brinkley C."/>
            <person name="Brooks S."/>
            <person name="Chu G."/>
            <person name="Coleman H."/>
            <person name="Engle J."/>
            <person name="Gestole M."/>
            <person name="Greene A."/>
            <person name="Guan X."/>
            <person name="Gupta J."/>
            <person name="Haghighi P."/>
            <person name="Han J."/>
            <person name="Hansen N."/>
            <person name="Ho S.-L."/>
            <person name="Hu P."/>
            <person name="Hunter G."/>
            <person name="Hurle B."/>
            <person name="Idol J.R."/>
            <person name="Kwong P."/>
            <person name="Laric P."/>
            <person name="Larson S."/>
            <person name="Lee-Lin S.-Q."/>
            <person name="Legaspi R."/>
            <person name="Madden M."/>
            <person name="Maduro Q.L."/>
            <person name="Maduro V.B."/>
            <person name="Margulies E.H."/>
            <person name="Masiello C."/>
            <person name="Maskeri B."/>
            <person name="McDowell J."/>
            <person name="Mojidi H.A."/>
            <person name="Mullikin J.C."/>
            <person name="Oestreicher J.S."/>
            <person name="Park M."/>
            <person name="Portnoy M.E."/>
            <person name="Prasad A."/>
            <person name="Puri O."/>
            <person name="Reddix-Dugue N."/>
            <person name="Schandler K."/>
            <person name="Schueler M.G."/>
            <person name="Sison C."/>
            <person name="Stantripop S."/>
            <person name="Stephen E."/>
            <person name="Taye A."/>
            <person name="Thomas J.W."/>
            <person name="Thomas P.J."/>
            <person name="Tsipouri V."/>
            <person name="Ung L."/>
            <person name="Vogt J.L."/>
            <person name="Wetherby K.D."/>
            <person name="Young A."/>
            <person name="Green E.D."/>
        </authorList>
    </citation>
    <scope>NUCLEOTIDE SEQUENCE [LARGE SCALE GENOMIC DNA]</scope>
</reference>